<evidence type="ECO:0000250" key="1"/>
<evidence type="ECO:0000255" key="2"/>
<evidence type="ECO:0000305" key="3"/>
<accession>B9IIR5</accession>
<proteinExistence type="evidence at transcript level"/>
<dbReference type="EMBL" id="CM009305">
    <property type="protein sequence ID" value="EEF05171.1"/>
    <property type="molecule type" value="Genomic_DNA"/>
</dbReference>
<dbReference type="FunCoup" id="B9IIR5">
    <property type="interactions" value="384"/>
</dbReference>
<dbReference type="STRING" id="3694.B9IIR5"/>
<dbReference type="EnsemblPlants" id="Potri.016G075400.1.v4.1">
    <property type="protein sequence ID" value="Potri.016G075400.1.v4.1"/>
    <property type="gene ID" value="Potri.016G075400.v4.1"/>
</dbReference>
<dbReference type="Gramene" id="Potri.016G075400.1.v4.1">
    <property type="protein sequence ID" value="Potri.016G075400.1.v4.1"/>
    <property type="gene ID" value="Potri.016G075400.v4.1"/>
</dbReference>
<dbReference type="KEGG" id="pop:7469972"/>
<dbReference type="eggNOG" id="ENOG502RJHP">
    <property type="taxonomic scope" value="Eukaryota"/>
</dbReference>
<dbReference type="HOGENOM" id="CLU_066104_3_1_1"/>
<dbReference type="InParanoid" id="B9IIR5"/>
<dbReference type="OMA" id="MPRRTHH"/>
<dbReference type="OrthoDB" id="753675at2759"/>
<dbReference type="Proteomes" id="UP000006729">
    <property type="component" value="Chromosome 16"/>
</dbReference>
<dbReference type="ExpressionAtlas" id="B9IIR5">
    <property type="expression patterns" value="differential"/>
</dbReference>
<dbReference type="GO" id="GO:0048226">
    <property type="term" value="C:Casparian strip"/>
    <property type="evidence" value="ECO:0000318"/>
    <property type="project" value="GO_Central"/>
</dbReference>
<dbReference type="GO" id="GO:0005886">
    <property type="term" value="C:plasma membrane"/>
    <property type="evidence" value="ECO:0000318"/>
    <property type="project" value="GO_Central"/>
</dbReference>
<dbReference type="GO" id="GO:0042545">
    <property type="term" value="P:cell wall modification"/>
    <property type="evidence" value="ECO:0000318"/>
    <property type="project" value="GO_Central"/>
</dbReference>
<dbReference type="GO" id="GO:0007043">
    <property type="term" value="P:cell-cell junction assembly"/>
    <property type="evidence" value="ECO:0000318"/>
    <property type="project" value="GO_Central"/>
</dbReference>
<dbReference type="InterPro" id="IPR006459">
    <property type="entry name" value="CASP/CASPL"/>
</dbReference>
<dbReference type="InterPro" id="IPR006702">
    <property type="entry name" value="CASP_dom"/>
</dbReference>
<dbReference type="InterPro" id="IPR044173">
    <property type="entry name" value="CASPL"/>
</dbReference>
<dbReference type="NCBIfam" id="TIGR01569">
    <property type="entry name" value="A_tha_TIGR01569"/>
    <property type="match status" value="1"/>
</dbReference>
<dbReference type="PANTHER" id="PTHR36488:SF11">
    <property type="entry name" value="CASP-LIKE PROTEIN"/>
    <property type="match status" value="1"/>
</dbReference>
<dbReference type="PANTHER" id="PTHR36488">
    <property type="entry name" value="CASP-LIKE PROTEIN 1U1"/>
    <property type="match status" value="1"/>
</dbReference>
<dbReference type="Pfam" id="PF04535">
    <property type="entry name" value="CASP_dom"/>
    <property type="match status" value="1"/>
</dbReference>
<keyword id="KW-1003">Cell membrane</keyword>
<keyword id="KW-0961">Cell wall biogenesis/degradation</keyword>
<keyword id="KW-0325">Glycoprotein</keyword>
<keyword id="KW-0472">Membrane</keyword>
<keyword id="KW-1185">Reference proteome</keyword>
<keyword id="KW-0812">Transmembrane</keyword>
<keyword id="KW-1133">Transmembrane helix</keyword>
<sequence length="199" mass="21161">MMRGSTEIDMPESSSVSKGTAPLIAAPMKEKGGYKKGIAIFDFILRLAAIATALAAAASMGTSDETLPFFTQFFQFQASYDDLPTFQFFVIAMAIVAGYLVLSLPFSIVAIVRPHAAGPRLLLIILDTVALTLNTAAGAAAAAIVYLAHNGNSSTNWLAICQQFGDFCQKNSGAVVASFITVVIFVFLLVLSAFALRRH</sequence>
<name>CASP2_POPTR</name>
<gene>
    <name type="ORF">POPTRDRAFT_576556</name>
</gene>
<comment type="function">
    <text evidence="1">Regulates membrane-cell wall junctions and localized cell wall deposition. Required for establishment of the Casparian strip membrane domain (CSD) and the subsequent formation of Casparian strips, a cell wall modification of the root endodermis that determines an apoplastic barrier between the intraorganismal apoplasm and the extraorganismal apoplasm and prevents lateral diffusion (By similarity).</text>
</comment>
<comment type="subunit">
    <text evidence="1">Homodimer and heterodimers.</text>
</comment>
<comment type="subcellular location">
    <subcellularLocation>
        <location evidence="1">Cell membrane</location>
        <topology evidence="1">Multi-pass membrane protein</topology>
    </subcellularLocation>
    <text evidence="1">Very restricted localization following a belt shape within the plasma membrane which coincides with the position of the Casparian strip membrane domain in the root endodermis.</text>
</comment>
<comment type="similarity">
    <text evidence="3">Belongs to the Casparian strip membrane proteins (CASP) family.</text>
</comment>
<organism>
    <name type="scientific">Populus trichocarpa</name>
    <name type="common">Western balsam poplar</name>
    <name type="synonym">Populus balsamifera subsp. trichocarpa</name>
    <dbReference type="NCBI Taxonomy" id="3694"/>
    <lineage>
        <taxon>Eukaryota</taxon>
        <taxon>Viridiplantae</taxon>
        <taxon>Streptophyta</taxon>
        <taxon>Embryophyta</taxon>
        <taxon>Tracheophyta</taxon>
        <taxon>Spermatophyta</taxon>
        <taxon>Magnoliopsida</taxon>
        <taxon>eudicotyledons</taxon>
        <taxon>Gunneridae</taxon>
        <taxon>Pentapetalae</taxon>
        <taxon>rosids</taxon>
        <taxon>fabids</taxon>
        <taxon>Malpighiales</taxon>
        <taxon>Salicaceae</taxon>
        <taxon>Saliceae</taxon>
        <taxon>Populus</taxon>
    </lineage>
</organism>
<reference key="1">
    <citation type="journal article" date="2006" name="Science">
        <title>The genome of black cottonwood, Populus trichocarpa (Torr. &amp; Gray).</title>
        <authorList>
            <person name="Tuskan G.A."/>
            <person name="Difazio S."/>
            <person name="Jansson S."/>
            <person name="Bohlmann J."/>
            <person name="Grigoriev I."/>
            <person name="Hellsten U."/>
            <person name="Putnam N."/>
            <person name="Ralph S."/>
            <person name="Rombauts S."/>
            <person name="Salamov A."/>
            <person name="Schein J."/>
            <person name="Sterck L."/>
            <person name="Aerts A."/>
            <person name="Bhalerao R.R."/>
            <person name="Bhalerao R.P."/>
            <person name="Blaudez D."/>
            <person name="Boerjan W."/>
            <person name="Brun A."/>
            <person name="Brunner A."/>
            <person name="Busov V."/>
            <person name="Campbell M."/>
            <person name="Carlson J."/>
            <person name="Chalot M."/>
            <person name="Chapman J."/>
            <person name="Chen G.-L."/>
            <person name="Cooper D."/>
            <person name="Coutinho P.M."/>
            <person name="Couturier J."/>
            <person name="Covert S."/>
            <person name="Cronk Q."/>
            <person name="Cunningham R."/>
            <person name="Davis J."/>
            <person name="Degroeve S."/>
            <person name="Dejardin A."/>
            <person name="dePamphilis C.W."/>
            <person name="Detter J."/>
            <person name="Dirks B."/>
            <person name="Dubchak I."/>
            <person name="Duplessis S."/>
            <person name="Ehlting J."/>
            <person name="Ellis B."/>
            <person name="Gendler K."/>
            <person name="Goodstein D."/>
            <person name="Gribskov M."/>
            <person name="Grimwood J."/>
            <person name="Groover A."/>
            <person name="Gunter L."/>
            <person name="Hamberger B."/>
            <person name="Heinze B."/>
            <person name="Helariutta Y."/>
            <person name="Henrissat B."/>
            <person name="Holligan D."/>
            <person name="Holt R."/>
            <person name="Huang W."/>
            <person name="Islam-Faridi N."/>
            <person name="Jones S."/>
            <person name="Jones-Rhoades M."/>
            <person name="Jorgensen R."/>
            <person name="Joshi C."/>
            <person name="Kangasjaervi J."/>
            <person name="Karlsson J."/>
            <person name="Kelleher C."/>
            <person name="Kirkpatrick R."/>
            <person name="Kirst M."/>
            <person name="Kohler A."/>
            <person name="Kalluri U."/>
            <person name="Larimer F."/>
            <person name="Leebens-Mack J."/>
            <person name="Leple J.-C."/>
            <person name="Locascio P."/>
            <person name="Lou Y."/>
            <person name="Lucas S."/>
            <person name="Martin F."/>
            <person name="Montanini B."/>
            <person name="Napoli C."/>
            <person name="Nelson D.R."/>
            <person name="Nelson C."/>
            <person name="Nieminen K."/>
            <person name="Nilsson O."/>
            <person name="Pereda V."/>
            <person name="Peter G."/>
            <person name="Philippe R."/>
            <person name="Pilate G."/>
            <person name="Poliakov A."/>
            <person name="Razumovskaya J."/>
            <person name="Richardson P."/>
            <person name="Rinaldi C."/>
            <person name="Ritland K."/>
            <person name="Rouze P."/>
            <person name="Ryaboy D."/>
            <person name="Schmutz J."/>
            <person name="Schrader J."/>
            <person name="Segerman B."/>
            <person name="Shin H."/>
            <person name="Siddiqui A."/>
            <person name="Sterky F."/>
            <person name="Terry A."/>
            <person name="Tsai C.-J."/>
            <person name="Uberbacher E."/>
            <person name="Unneberg P."/>
            <person name="Vahala J."/>
            <person name="Wall K."/>
            <person name="Wessler S."/>
            <person name="Yang G."/>
            <person name="Yin T."/>
            <person name="Douglas C."/>
            <person name="Marra M."/>
            <person name="Sandberg G."/>
            <person name="Van de Peer Y."/>
            <person name="Rokhsar D.S."/>
        </authorList>
    </citation>
    <scope>NUCLEOTIDE SEQUENCE [LARGE SCALE GENOMIC DNA]</scope>
    <source>
        <strain>cv. Nisqually</strain>
    </source>
</reference>
<reference key="2">
    <citation type="submission" date="2008-12" db="EMBL/GenBank/DDBJ databases">
        <authorList>
            <consortium name="US DOE Joint Genome Institute (JGI-PGF)"/>
            <person name="Grigoriev I.V."/>
            <person name="Terry A."/>
            <person name="Salamov A.A."/>
            <person name="Otillar R."/>
            <person name="Lou Y."/>
            <person name="Lucas S."/>
            <person name="Hammon N."/>
            <person name="Glavina del Rio T."/>
            <person name="Detter J."/>
            <person name="Kalin E."/>
            <person name="Tice H."/>
            <person name="Pitluck S."/>
            <person name="Chapman J."/>
            <person name="Putnam N.H."/>
            <person name="Brunner A."/>
            <person name="Busov V."/>
            <person name="Campbell M."/>
            <person name="Chalot M."/>
            <person name="Covert S."/>
            <person name="Davis J."/>
            <person name="DiFazio S."/>
            <person name="Gribskov M."/>
            <person name="Gunter L."/>
            <person name="Hamberger B."/>
            <person name="Jansson S."/>
            <person name="Joshi C."/>
            <person name="Larimer F."/>
            <person name="Martin F."/>
            <person name="Napoli C."/>
            <person name="Nelson D."/>
            <person name="Ralph S."/>
            <person name="Rombauts S."/>
            <person name="Rouze P."/>
            <person name="Schrader J."/>
            <person name="Tsai C."/>
            <person name="Vahala J."/>
            <person name="Tuskan G."/>
            <person name="Rokhsar D."/>
        </authorList>
    </citation>
    <scope>GENOME REANNOTATION</scope>
    <source>
        <strain>cv. Nisqually</strain>
    </source>
</reference>
<reference key="3">
    <citation type="journal article" date="2014" name="Plant Physiol.">
        <title>Functional and evolutionary analysis of the CASPARIAN STRIP MEMBRANE DOMAIN PROTEIN family.</title>
        <authorList>
            <person name="Roppolo D."/>
            <person name="Boeckmann B."/>
            <person name="Pfister A."/>
            <person name="Boutet E."/>
            <person name="Rubio M.C."/>
            <person name="Denervaud-Tendon V."/>
            <person name="Vermeer J.E."/>
            <person name="Gheyselinck J."/>
            <person name="Xenarios I."/>
            <person name="Geldner N."/>
        </authorList>
    </citation>
    <scope>GENE FAMILY</scope>
    <scope>NOMENCLATURE</scope>
</reference>
<feature type="chain" id="PRO_0000391540" description="Casparian strip membrane protein 2">
    <location>
        <begin position="1"/>
        <end position="199"/>
    </location>
</feature>
<feature type="topological domain" description="Cytoplasmic" evidence="2">
    <location>
        <begin position="1"/>
        <end position="37"/>
    </location>
</feature>
<feature type="transmembrane region" description="Helical" evidence="2">
    <location>
        <begin position="38"/>
        <end position="58"/>
    </location>
</feature>
<feature type="topological domain" description="Extracellular" evidence="2">
    <location>
        <begin position="59"/>
        <end position="87"/>
    </location>
</feature>
<feature type="transmembrane region" description="Helical" evidence="2">
    <location>
        <begin position="88"/>
        <end position="108"/>
    </location>
</feature>
<feature type="topological domain" description="Cytoplasmic" evidence="2">
    <location>
        <begin position="109"/>
        <end position="120"/>
    </location>
</feature>
<feature type="transmembrane region" description="Helical" evidence="2">
    <location>
        <begin position="121"/>
        <end position="141"/>
    </location>
</feature>
<feature type="topological domain" description="Extracellular" evidence="2">
    <location>
        <begin position="142"/>
        <end position="173"/>
    </location>
</feature>
<feature type="transmembrane region" description="Helical" evidence="2">
    <location>
        <begin position="174"/>
        <end position="194"/>
    </location>
</feature>
<feature type="topological domain" description="Cytoplasmic" evidence="2">
    <location>
        <begin position="195"/>
        <end position="199"/>
    </location>
</feature>
<feature type="glycosylation site" description="N-linked (GlcNAc...) asparagine" evidence="2">
    <location>
        <position position="152"/>
    </location>
</feature>
<protein>
    <recommendedName>
        <fullName>Casparian strip membrane protein 2</fullName>
        <shortName>PtCASP2</shortName>
    </recommendedName>
</protein>